<feature type="chain" id="PRO_1000199750" description="Nucleoside triphosphate/diphosphate phosphatase">
    <location>
        <begin position="1"/>
        <end position="176"/>
    </location>
</feature>
<feature type="active site" description="Proton donor" evidence="1">
    <location>
        <position position="23"/>
    </location>
</feature>
<feature type="binding site" evidence="1">
    <location>
        <position position="87"/>
    </location>
    <ligand>
        <name>Mg(2+)</name>
        <dbReference type="ChEBI" id="CHEBI:18420"/>
        <label>1</label>
    </ligand>
</feature>
<feature type="binding site" evidence="1">
    <location>
        <position position="103"/>
    </location>
    <ligand>
        <name>Mg(2+)</name>
        <dbReference type="ChEBI" id="CHEBI:18420"/>
        <label>1</label>
    </ligand>
</feature>
<feature type="binding site" evidence="1">
    <location>
        <position position="105"/>
    </location>
    <ligand>
        <name>Mg(2+)</name>
        <dbReference type="ChEBI" id="CHEBI:18420"/>
        <label>2</label>
    </ligand>
</feature>
<feature type="binding site" evidence="1">
    <location>
        <position position="107"/>
    </location>
    <ligand>
        <name>Mg(2+)</name>
        <dbReference type="ChEBI" id="CHEBI:18420"/>
        <label>1</label>
    </ligand>
</feature>
<feature type="binding site" evidence="1">
    <location>
        <position position="107"/>
    </location>
    <ligand>
        <name>Mg(2+)</name>
        <dbReference type="ChEBI" id="CHEBI:18420"/>
        <label>2</label>
    </ligand>
</feature>
<feature type="binding site" evidence="1">
    <location>
        <position position="120"/>
    </location>
    <ligand>
        <name>Mg(2+)</name>
        <dbReference type="ChEBI" id="CHEBI:18420"/>
        <label>2</label>
    </ligand>
</feature>
<feature type="binding site" evidence="1">
    <location>
        <position position="123"/>
    </location>
    <ligand>
        <name>Mg(2+)</name>
        <dbReference type="ChEBI" id="CHEBI:18420"/>
        <label>2</label>
    </ligand>
</feature>
<organism>
    <name type="scientific">Bacillus cereus (strain B4264)</name>
    <dbReference type="NCBI Taxonomy" id="405532"/>
    <lineage>
        <taxon>Bacteria</taxon>
        <taxon>Bacillati</taxon>
        <taxon>Bacillota</taxon>
        <taxon>Bacilli</taxon>
        <taxon>Bacillales</taxon>
        <taxon>Bacillaceae</taxon>
        <taxon>Bacillus</taxon>
        <taxon>Bacillus cereus group</taxon>
    </lineage>
</organism>
<dbReference type="EC" id="3.6.1.15" evidence="1"/>
<dbReference type="EC" id="3.6.1.6" evidence="1"/>
<dbReference type="EMBL" id="CP001176">
    <property type="protein sequence ID" value="ACK59752.1"/>
    <property type="molecule type" value="Genomic_DNA"/>
</dbReference>
<dbReference type="RefSeq" id="WP_000506622.1">
    <property type="nucleotide sequence ID" value="NZ_VEHB01000026.1"/>
</dbReference>
<dbReference type="SMR" id="B7H9S1"/>
<dbReference type="KEGG" id="bcb:BCB4264_A0531"/>
<dbReference type="HOGENOM" id="CLU_109787_1_0_9"/>
<dbReference type="Proteomes" id="UP000007096">
    <property type="component" value="Chromosome"/>
</dbReference>
<dbReference type="GO" id="GO:0000287">
    <property type="term" value="F:magnesium ion binding"/>
    <property type="evidence" value="ECO:0007669"/>
    <property type="project" value="UniProtKB-UniRule"/>
</dbReference>
<dbReference type="GO" id="GO:0017110">
    <property type="term" value="F:nucleoside diphosphate phosphatase activity"/>
    <property type="evidence" value="ECO:0007669"/>
    <property type="project" value="UniProtKB-UniRule"/>
</dbReference>
<dbReference type="GO" id="GO:0017111">
    <property type="term" value="F:ribonucleoside triphosphate phosphatase activity"/>
    <property type="evidence" value="ECO:0007669"/>
    <property type="project" value="UniProtKB-UniRule"/>
</dbReference>
<dbReference type="Gene3D" id="2.40.380.10">
    <property type="entry name" value="FomD-like"/>
    <property type="match status" value="1"/>
</dbReference>
<dbReference type="HAMAP" id="MF_01568">
    <property type="entry name" value="Ntdp"/>
    <property type="match status" value="1"/>
</dbReference>
<dbReference type="InterPro" id="IPR007295">
    <property type="entry name" value="DUF402"/>
</dbReference>
<dbReference type="InterPro" id="IPR035930">
    <property type="entry name" value="FomD-like_sf"/>
</dbReference>
<dbReference type="InterPro" id="IPR050212">
    <property type="entry name" value="Ntdp-like"/>
</dbReference>
<dbReference type="InterPro" id="IPR016882">
    <property type="entry name" value="SA1684"/>
</dbReference>
<dbReference type="NCBIfam" id="NF010183">
    <property type="entry name" value="PRK13662.1"/>
    <property type="match status" value="1"/>
</dbReference>
<dbReference type="PANTHER" id="PTHR39159">
    <property type="match status" value="1"/>
</dbReference>
<dbReference type="PANTHER" id="PTHR39159:SF1">
    <property type="entry name" value="UPF0374 PROTEIN YGAC"/>
    <property type="match status" value="1"/>
</dbReference>
<dbReference type="Pfam" id="PF04167">
    <property type="entry name" value="DUF402"/>
    <property type="match status" value="1"/>
</dbReference>
<dbReference type="PIRSF" id="PIRSF028345">
    <property type="entry name" value="UCP028345"/>
    <property type="match status" value="1"/>
</dbReference>
<dbReference type="SUPFAM" id="SSF159234">
    <property type="entry name" value="FomD-like"/>
    <property type="match status" value="1"/>
</dbReference>
<sequence>MGFPKEGEKVQIHSYKHNGSIHRMWEETTILKGTQSLVIGANDRTVVTESDGRTWITREPAICYFHANYWFNVIGMLREDGVYYYCNLSSPFAYDPEALKYIDYDLDIKVYPDMTYTLLDEDEYEKHSEIMQYPPVIDTILKRNVAHLTQWIHQRKGPFAPDFVDMWYERYLMYRN</sequence>
<gene>
    <name type="ordered locus">BCB4264_A0531</name>
</gene>
<proteinExistence type="inferred from homology"/>
<comment type="function">
    <text evidence="1">Has nucleoside phosphatase activity towards nucleoside triphosphates and nucleoside diphosphates.</text>
</comment>
<comment type="catalytic activity">
    <reaction evidence="1">
        <text>a ribonucleoside 5'-triphosphate + H2O = a ribonucleoside 5'-diphosphate + phosphate + H(+)</text>
        <dbReference type="Rhea" id="RHEA:23680"/>
        <dbReference type="ChEBI" id="CHEBI:15377"/>
        <dbReference type="ChEBI" id="CHEBI:15378"/>
        <dbReference type="ChEBI" id="CHEBI:43474"/>
        <dbReference type="ChEBI" id="CHEBI:57930"/>
        <dbReference type="ChEBI" id="CHEBI:61557"/>
        <dbReference type="EC" id="3.6.1.15"/>
    </reaction>
</comment>
<comment type="catalytic activity">
    <reaction evidence="1">
        <text>a ribonucleoside 5'-diphosphate + H2O = a ribonucleoside 5'-phosphate + phosphate + H(+)</text>
        <dbReference type="Rhea" id="RHEA:36799"/>
        <dbReference type="ChEBI" id="CHEBI:15377"/>
        <dbReference type="ChEBI" id="CHEBI:15378"/>
        <dbReference type="ChEBI" id="CHEBI:43474"/>
        <dbReference type="ChEBI" id="CHEBI:57930"/>
        <dbReference type="ChEBI" id="CHEBI:58043"/>
        <dbReference type="EC" id="3.6.1.6"/>
    </reaction>
</comment>
<comment type="cofactor">
    <cofactor evidence="1">
        <name>Mg(2+)</name>
        <dbReference type="ChEBI" id="CHEBI:18420"/>
    </cofactor>
</comment>
<comment type="similarity">
    <text evidence="1">Belongs to the Ntdp family.</text>
</comment>
<evidence type="ECO:0000255" key="1">
    <source>
        <dbReference type="HAMAP-Rule" id="MF_01568"/>
    </source>
</evidence>
<accession>B7H9S1</accession>
<name>NTDP_BACC4</name>
<protein>
    <recommendedName>
        <fullName evidence="1">Nucleoside triphosphate/diphosphate phosphatase</fullName>
        <ecNumber evidence="1">3.6.1.15</ecNumber>
        <ecNumber evidence="1">3.6.1.6</ecNumber>
    </recommendedName>
</protein>
<reference key="1">
    <citation type="submission" date="2008-10" db="EMBL/GenBank/DDBJ databases">
        <title>Genome sequence of Bacillus cereus B4264.</title>
        <authorList>
            <person name="Dodson R.J."/>
            <person name="Durkin A.S."/>
            <person name="Rosovitz M.J."/>
            <person name="Rasko D.A."/>
            <person name="Hoffmaster A."/>
            <person name="Ravel J."/>
            <person name="Sutton G."/>
        </authorList>
    </citation>
    <scope>NUCLEOTIDE SEQUENCE [LARGE SCALE GENOMIC DNA]</scope>
    <source>
        <strain>B4264</strain>
    </source>
</reference>
<keyword id="KW-0378">Hydrolase</keyword>
<keyword id="KW-0460">Magnesium</keyword>
<keyword id="KW-0479">Metal-binding</keyword>